<accession>Q07FH9</accession>
<protein>
    <recommendedName>
        <fullName evidence="1">Non-structural protein 1</fullName>
        <shortName evidence="1">NS1</shortName>
    </recommendedName>
    <alternativeName>
        <fullName evidence="1">NS1A</fullName>
    </alternativeName>
</protein>
<gene>
    <name evidence="1" type="primary">NS</name>
</gene>
<organismHost>
    <name type="scientific">Aves</name>
    <dbReference type="NCBI Taxonomy" id="8782"/>
</organismHost>
<organismHost>
    <name type="scientific">Homo sapiens</name>
    <name type="common">Human</name>
    <dbReference type="NCBI Taxonomy" id="9606"/>
</organismHost>
<organismHost>
    <name type="scientific">Sus scrofa</name>
    <name type="common">Pig</name>
    <dbReference type="NCBI Taxonomy" id="9823"/>
</organismHost>
<sequence length="230" mass="25823">MDSHTVSSFQVDCFLWHVRKQVADQDLGDAPFLDRLRRDQKSLKGRGSTLGLNIETATCVGKQIVERILKEESDEAFKMTMASALASRYLTDMTIEEMSRDWFMLMPKQKVAGPLCVRMDQAIMDKNIILKANFSVIFDRLETLTLLRAFTEEGAIVGEISPLPSLPGHTNEDVKNAIGVLIGGLEWNDNTVRVSETLQRFAWRSSNENGGPPFTPTQKRKMAGTIRSEV</sequence>
<reference key="1">
    <citation type="submission" date="2006-09" db="EMBL/GenBank/DDBJ databases">
        <title>The NIAID influenza genome sequencing project.</title>
        <authorList>
            <person name="Ghedin E."/>
            <person name="Spiro D."/>
            <person name="Miller N."/>
            <person name="Zaborsky J."/>
            <person name="Feldblyum T."/>
            <person name="Subbu V."/>
            <person name="Shumway M."/>
            <person name="Sparenborg J."/>
            <person name="Groveman L."/>
            <person name="Halpin R."/>
            <person name="Sitz J."/>
            <person name="Koo H."/>
            <person name="Salzberg S.L."/>
            <person name="Webster R.G."/>
            <person name="Hoffmann E."/>
            <person name="Krauss S."/>
            <person name="Naeve C."/>
            <person name="Bao Y."/>
            <person name="Bolotov P."/>
            <person name="Dernovoy D."/>
            <person name="Kiryutin B."/>
            <person name="Lipman D.J."/>
            <person name="Tatusova T."/>
        </authorList>
    </citation>
    <scope>NUCLEOTIDE SEQUENCE [GENOMIC RNA]</scope>
</reference>
<reference key="2">
    <citation type="submission" date="2006-09" db="EMBL/GenBank/DDBJ databases">
        <authorList>
            <consortium name="The NIAID Influenza Genome Sequencing Consortium"/>
        </authorList>
    </citation>
    <scope>NUCLEOTIDE SEQUENCE [GENOMIC RNA]</scope>
</reference>
<organism>
    <name type="scientific">Influenza A virus (strain A/China:Nanchang/11/1996 H1N1)</name>
    <dbReference type="NCBI Taxonomy" id="394786"/>
    <lineage>
        <taxon>Viruses</taxon>
        <taxon>Riboviria</taxon>
        <taxon>Orthornavirae</taxon>
        <taxon>Negarnaviricota</taxon>
        <taxon>Polyploviricotina</taxon>
        <taxon>Insthoviricetes</taxon>
        <taxon>Articulavirales</taxon>
        <taxon>Orthomyxoviridae</taxon>
        <taxon>Alphainfluenzavirus</taxon>
        <taxon>Alphainfluenzavirus influenzae</taxon>
        <taxon>Influenza A virus</taxon>
    </lineage>
</organism>
<evidence type="ECO:0000255" key="1">
    <source>
        <dbReference type="HAMAP-Rule" id="MF_04066"/>
    </source>
</evidence>
<evidence type="ECO:0000256" key="2">
    <source>
        <dbReference type="SAM" id="MobiDB-lite"/>
    </source>
</evidence>
<comment type="function">
    <text evidence="1">Inhibits post-transcriptional processing of cellular pre-mRNA, by binding and inhibiting two cellular proteins that are required for the 3'-end processing of cellular pre-mRNAs: the 30 kDa cleavage and polyadenylation specificity factor/CPSF4 and the poly(A)-binding protein 2/PABPN1. In turn, unprocessed 3' end pre-mRNAs accumulate in the host nucleus and are no longer exported to the cytoplasm. Cellular protein synthesis is thereby shut off very early after virus infection. Viral protein synthesis is not affected by the inhibition of the cellular 3' end processing machinery because the poly(A) tails of viral mRNAs are produced by the viral polymerase through a stuttering mechanism. Prevents the establishment of the cellular antiviral state by inhibiting TRIM25-mediated RIGI ubiquitination, which normally triggers the antiviral transduction signal that leads to the activation of type I IFN genes by transcription factors IRF3 and IRF7. Also binds poly(A) and U6 snRNA. Inhibits the integrated stress response (ISR) in the infected cell by blocking dsRNA binding by EIF2AK2/PKR and further phosphorylation of EIF2S1/EIF-2ALPHA. Stress granule formation is thus inhibited, which allows protein synthesis and viral replication.</text>
</comment>
<comment type="subunit">
    <text evidence="1">Homodimer. Interacts with host TRIM25 (via coiled coil); this interaction specifically inhibits TRIM25 multimerization and TRIM25-mediated RIGI CARD ubiquitination. Interacts with human EIF2AK2/PKR, CPSF4, IVNS1ABP and PABPN1.</text>
</comment>
<comment type="subcellular location">
    <subcellularLocation>
        <location evidence="1">Host nucleus</location>
    </subcellularLocation>
    <subcellularLocation>
        <location evidence="1">Host cytoplasm</location>
    </subcellularLocation>
    <text evidence="1">In uninfected, transfected cells, NS1 is localized in the nucleus. Only in virus infected cells, the nuclear export signal is unveiled, presumably by a viral protein, and a fraction of NS1 is exported in the cytoplasm.</text>
</comment>
<comment type="alternative products">
    <event type="alternative splicing"/>
    <isoform>
        <id>Q07FH9-1</id>
        <name>NS1</name>
        <sequence type="displayed"/>
    </isoform>
    <isoform>
        <id>Q07FI0-1</id>
        <name>NEP</name>
        <name>NS2</name>
        <sequence type="external"/>
    </isoform>
</comment>
<comment type="domain">
    <text evidence="1">The dsRNA-binding region is required for suppression of RNA silencing.</text>
</comment>
<comment type="PTM">
    <text evidence="1">Upon interferon induction, ISGylated via host HERC5; this results in the impairment of NS1 interaction with RNA targets due to its inability to form homodimers and to interact with host EIF2AK2/PKR.</text>
</comment>
<comment type="similarity">
    <text evidence="1">Belongs to the influenza A viruses NS1 family.</text>
</comment>
<keyword id="KW-0025">Alternative splicing</keyword>
<keyword id="KW-1262">Eukaryotic host gene expression shutoff by virus</keyword>
<keyword id="KW-1035">Host cytoplasm</keyword>
<keyword id="KW-1190">Host gene expression shutoff by virus</keyword>
<keyword id="KW-1192">Host mRNA suppression by virus</keyword>
<keyword id="KW-1048">Host nucleus</keyword>
<keyword id="KW-0945">Host-virus interaction</keyword>
<keyword id="KW-1090">Inhibition of host innate immune response by virus</keyword>
<keyword id="KW-1114">Inhibition of host interferon signaling pathway by virus</keyword>
<keyword id="KW-1102">Inhibition of host PKR by virus</keyword>
<keyword id="KW-1103">Inhibition of host pre-mRNA processing by virus</keyword>
<keyword id="KW-1088">Inhibition of host RIG-I by virus</keyword>
<keyword id="KW-1113">Inhibition of host RLR pathway by virus</keyword>
<keyword id="KW-0922">Interferon antiviral system evasion</keyword>
<keyword id="KW-0694">RNA-binding</keyword>
<keyword id="KW-0832">Ubl conjugation</keyword>
<keyword id="KW-0899">Viral immunoevasion</keyword>
<proteinExistence type="inferred from homology"/>
<name>NS1_I96A3</name>
<dbReference type="EMBL" id="CY016240">
    <property type="protein sequence ID" value="ABI95266.1"/>
    <property type="molecule type" value="Other_RNA"/>
</dbReference>
<dbReference type="SMR" id="Q07FH9"/>
<dbReference type="Proteomes" id="UP000008586">
    <property type="component" value="Genome"/>
</dbReference>
<dbReference type="GO" id="GO:0030430">
    <property type="term" value="C:host cell cytoplasm"/>
    <property type="evidence" value="ECO:0007669"/>
    <property type="project" value="UniProtKB-SubCell"/>
</dbReference>
<dbReference type="GO" id="GO:0042025">
    <property type="term" value="C:host cell nucleus"/>
    <property type="evidence" value="ECO:0007669"/>
    <property type="project" value="UniProtKB-SubCell"/>
</dbReference>
<dbReference type="GO" id="GO:0030291">
    <property type="term" value="F:protein serine/threonine kinase inhibitor activity"/>
    <property type="evidence" value="ECO:0007669"/>
    <property type="project" value="UniProtKB-KW"/>
</dbReference>
<dbReference type="GO" id="GO:0003723">
    <property type="term" value="F:RNA binding"/>
    <property type="evidence" value="ECO:0007669"/>
    <property type="project" value="UniProtKB-KW"/>
</dbReference>
<dbReference type="GO" id="GO:0039540">
    <property type="term" value="P:symbiont-mediated suppression of host cytoplasmic pattern recognition receptor signaling pathway via inhibition of RIG-I activity"/>
    <property type="evidence" value="ECO:0007669"/>
    <property type="project" value="UniProtKB-KW"/>
</dbReference>
<dbReference type="GO" id="GO:0039657">
    <property type="term" value="P:symbiont-mediated suppression of host gene expression"/>
    <property type="evidence" value="ECO:0007669"/>
    <property type="project" value="UniProtKB-KW"/>
</dbReference>
<dbReference type="GO" id="GO:0039524">
    <property type="term" value="P:symbiont-mediated suppression of host mRNA processing"/>
    <property type="evidence" value="ECO:0007669"/>
    <property type="project" value="UniProtKB-KW"/>
</dbReference>
<dbReference type="GO" id="GO:0039580">
    <property type="term" value="P:symbiont-mediated suppression of host PKR/eIFalpha signaling"/>
    <property type="evidence" value="ECO:0007669"/>
    <property type="project" value="UniProtKB-KW"/>
</dbReference>
<dbReference type="GO" id="GO:0039502">
    <property type="term" value="P:symbiont-mediated suppression of host type I interferon-mediated signaling pathway"/>
    <property type="evidence" value="ECO:0007669"/>
    <property type="project" value="UniProtKB-KW"/>
</dbReference>
<dbReference type="FunFam" id="1.10.287.10:FF:000001">
    <property type="entry name" value="Non-structural protein 1"/>
    <property type="match status" value="1"/>
</dbReference>
<dbReference type="FunFam" id="3.30.420.330:FF:000001">
    <property type="entry name" value="Non-structural protein 1"/>
    <property type="match status" value="1"/>
</dbReference>
<dbReference type="Gene3D" id="3.30.420.330">
    <property type="entry name" value="Influenza virus non-structural protein, effector domain"/>
    <property type="match status" value="1"/>
</dbReference>
<dbReference type="Gene3D" id="1.10.287.10">
    <property type="entry name" value="S15/NS1, RNA-binding"/>
    <property type="match status" value="1"/>
</dbReference>
<dbReference type="HAMAP" id="MF_04066">
    <property type="entry name" value="INFV_NS1"/>
    <property type="match status" value="1"/>
</dbReference>
<dbReference type="InterPro" id="IPR004208">
    <property type="entry name" value="NS1"/>
</dbReference>
<dbReference type="InterPro" id="IPR000256">
    <property type="entry name" value="NS1A"/>
</dbReference>
<dbReference type="InterPro" id="IPR038064">
    <property type="entry name" value="NS1A_effect_dom-like_sf"/>
</dbReference>
<dbReference type="InterPro" id="IPR009068">
    <property type="entry name" value="uS15_NS1_RNA-bd_sf"/>
</dbReference>
<dbReference type="Pfam" id="PF00600">
    <property type="entry name" value="Flu_NS1"/>
    <property type="match status" value="1"/>
</dbReference>
<dbReference type="SUPFAM" id="SSF143021">
    <property type="entry name" value="Ns1 effector domain-like"/>
    <property type="match status" value="1"/>
</dbReference>
<dbReference type="SUPFAM" id="SSF47060">
    <property type="entry name" value="S15/NS1 RNA-binding domain"/>
    <property type="match status" value="1"/>
</dbReference>
<feature type="chain" id="PRO_0000372992" description="Non-structural protein 1">
    <location>
        <begin position="1"/>
        <end position="230"/>
    </location>
</feature>
<feature type="region of interest" description="RNA-binding and homodimerization" evidence="1">
    <location>
        <begin position="1"/>
        <end position="73"/>
    </location>
</feature>
<feature type="region of interest" description="CPSF4-binding" evidence="1">
    <location>
        <begin position="180"/>
        <end position="215"/>
    </location>
</feature>
<feature type="region of interest" description="Disordered" evidence="2">
    <location>
        <begin position="206"/>
        <end position="230"/>
    </location>
</feature>
<feature type="region of interest" description="PABPN1-binding" evidence="1">
    <location>
        <begin position="223"/>
        <end position="230"/>
    </location>
</feature>
<feature type="short sequence motif" description="Nuclear localization signal" evidence="1">
    <location>
        <begin position="34"/>
        <end position="38"/>
    </location>
</feature>
<feature type="short sequence motif" description="Nuclear export signal" evidence="1">
    <location>
        <begin position="137"/>
        <end position="146"/>
    </location>
</feature>